<protein>
    <recommendedName>
        <fullName evidence="1">UPF0391 membrane protein BURPS668_A3117</fullName>
    </recommendedName>
</protein>
<keyword id="KW-1003">Cell membrane</keyword>
<keyword id="KW-0472">Membrane</keyword>
<keyword id="KW-0812">Transmembrane</keyword>
<keyword id="KW-1133">Transmembrane helix</keyword>
<name>Y7217_BURP6</name>
<evidence type="ECO:0000255" key="1">
    <source>
        <dbReference type="HAMAP-Rule" id="MF_01361"/>
    </source>
</evidence>
<accession>A3NP37</accession>
<reference key="1">
    <citation type="journal article" date="2010" name="Genome Biol. Evol.">
        <title>Continuing evolution of Burkholderia mallei through genome reduction and large-scale rearrangements.</title>
        <authorList>
            <person name="Losada L."/>
            <person name="Ronning C.M."/>
            <person name="DeShazer D."/>
            <person name="Woods D."/>
            <person name="Fedorova N."/>
            <person name="Kim H.S."/>
            <person name="Shabalina S.A."/>
            <person name="Pearson T.R."/>
            <person name="Brinkac L."/>
            <person name="Tan P."/>
            <person name="Nandi T."/>
            <person name="Crabtree J."/>
            <person name="Badger J."/>
            <person name="Beckstrom-Sternberg S."/>
            <person name="Saqib M."/>
            <person name="Schutzer S.E."/>
            <person name="Keim P."/>
            <person name="Nierman W.C."/>
        </authorList>
    </citation>
    <scope>NUCLEOTIDE SEQUENCE [LARGE SCALE GENOMIC DNA]</scope>
    <source>
        <strain>668</strain>
    </source>
</reference>
<organism>
    <name type="scientific">Burkholderia pseudomallei (strain 668)</name>
    <dbReference type="NCBI Taxonomy" id="320373"/>
    <lineage>
        <taxon>Bacteria</taxon>
        <taxon>Pseudomonadati</taxon>
        <taxon>Pseudomonadota</taxon>
        <taxon>Betaproteobacteria</taxon>
        <taxon>Burkholderiales</taxon>
        <taxon>Burkholderiaceae</taxon>
        <taxon>Burkholderia</taxon>
        <taxon>pseudomallei group</taxon>
    </lineage>
</organism>
<proteinExistence type="inferred from homology"/>
<sequence length="53" mass="5700">MLRYALIFFIIAIIAAVLGFGGIAAGAAEIAKILFYIFVVIFLVTLVLGVARR</sequence>
<gene>
    <name type="ordered locus">BURPS668_A3117</name>
</gene>
<feature type="chain" id="PRO_0000314221" description="UPF0391 membrane protein BURPS668_A3117">
    <location>
        <begin position="1"/>
        <end position="53"/>
    </location>
</feature>
<feature type="transmembrane region" description="Helical" evidence="1">
    <location>
        <begin position="5"/>
        <end position="25"/>
    </location>
</feature>
<feature type="transmembrane region" description="Helical" evidence="1">
    <location>
        <begin position="30"/>
        <end position="50"/>
    </location>
</feature>
<dbReference type="EMBL" id="CP000571">
    <property type="protein sequence ID" value="ABN88469.1"/>
    <property type="molecule type" value="Genomic_DNA"/>
</dbReference>
<dbReference type="RefSeq" id="WP_004523342.1">
    <property type="nucleotide sequence ID" value="NC_009075.1"/>
</dbReference>
<dbReference type="KEGG" id="bpd:BURPS668_A3117"/>
<dbReference type="HOGENOM" id="CLU_187346_0_1_4"/>
<dbReference type="GO" id="GO:0005886">
    <property type="term" value="C:plasma membrane"/>
    <property type="evidence" value="ECO:0007669"/>
    <property type="project" value="UniProtKB-SubCell"/>
</dbReference>
<dbReference type="HAMAP" id="MF_01361">
    <property type="entry name" value="UPF0391"/>
    <property type="match status" value="1"/>
</dbReference>
<dbReference type="InterPro" id="IPR009760">
    <property type="entry name" value="DUF1328"/>
</dbReference>
<dbReference type="NCBIfam" id="NF010226">
    <property type="entry name" value="PRK13682.1-1"/>
    <property type="match status" value="1"/>
</dbReference>
<dbReference type="NCBIfam" id="NF010229">
    <property type="entry name" value="PRK13682.1-4"/>
    <property type="match status" value="1"/>
</dbReference>
<dbReference type="Pfam" id="PF07043">
    <property type="entry name" value="DUF1328"/>
    <property type="match status" value="1"/>
</dbReference>
<dbReference type="PIRSF" id="PIRSF036466">
    <property type="entry name" value="UCP036466"/>
    <property type="match status" value="1"/>
</dbReference>
<comment type="subcellular location">
    <subcellularLocation>
        <location evidence="1">Cell membrane</location>
        <topology evidence="1">Multi-pass membrane protein</topology>
    </subcellularLocation>
</comment>
<comment type="similarity">
    <text evidence="1">Belongs to the UPF0391 family.</text>
</comment>